<name>Y2081_MYCTO</name>
<accession>P9WLK4</accession>
<accession>L0TA43</accession>
<accession>Q10689</accession>
<keyword id="KW-1003">Cell membrane</keyword>
<keyword id="KW-0472">Membrane</keyword>
<keyword id="KW-1185">Reference proteome</keyword>
<keyword id="KW-0812">Transmembrane</keyword>
<keyword id="KW-1133">Transmembrane helix</keyword>
<sequence length="146" mass="14238">MFANAGLSPFVAIWTARAASLYTSHNFWCAAAVSAAVYVGSAVVPAAVAGPLFVGRVSATIKAAAPSTTAAIATLATAANGQLRERGGAGGWVGVHCPVVGGGGVGHPRKAIAAAVSVHSTCMPAAFGGHLGLGDRSRSVSLSGTP</sequence>
<gene>
    <name type="ordered locus">MT2143</name>
</gene>
<feature type="chain" id="PRO_0000427463" description="Uncharacterized protein MT2143">
    <location>
        <begin position="1"/>
        <end position="146"/>
    </location>
</feature>
<feature type="transmembrane region" description="Helical" evidence="1">
    <location>
        <begin position="1"/>
        <end position="21"/>
    </location>
</feature>
<feature type="transmembrane region" description="Helical" evidence="1">
    <location>
        <begin position="35"/>
        <end position="55"/>
    </location>
</feature>
<feature type="transmembrane region" description="Helical" evidence="1">
    <location>
        <begin position="87"/>
        <end position="107"/>
    </location>
</feature>
<feature type="transmembrane region" description="Helical" evidence="1">
    <location>
        <begin position="111"/>
        <end position="131"/>
    </location>
</feature>
<evidence type="ECO:0000255" key="1"/>
<evidence type="ECO:0000305" key="2"/>
<dbReference type="EMBL" id="AE000516">
    <property type="protein sequence ID" value="AAK46425.1"/>
    <property type="status" value="ALT_INIT"/>
    <property type="molecule type" value="Genomic_DNA"/>
</dbReference>
<dbReference type="PIR" id="D70766">
    <property type="entry name" value="D70766"/>
</dbReference>
<dbReference type="KEGG" id="mtc:MT2143"/>
<dbReference type="HOGENOM" id="CLU_117441_0_0_11"/>
<dbReference type="Proteomes" id="UP000001020">
    <property type="component" value="Chromosome"/>
</dbReference>
<dbReference type="GO" id="GO:0005886">
    <property type="term" value="C:plasma membrane"/>
    <property type="evidence" value="ECO:0007669"/>
    <property type="project" value="UniProtKB-SubCell"/>
</dbReference>
<organism>
    <name type="scientific">Mycobacterium tuberculosis (strain CDC 1551 / Oshkosh)</name>
    <dbReference type="NCBI Taxonomy" id="83331"/>
    <lineage>
        <taxon>Bacteria</taxon>
        <taxon>Bacillati</taxon>
        <taxon>Actinomycetota</taxon>
        <taxon>Actinomycetes</taxon>
        <taxon>Mycobacteriales</taxon>
        <taxon>Mycobacteriaceae</taxon>
        <taxon>Mycobacterium</taxon>
        <taxon>Mycobacterium tuberculosis complex</taxon>
    </lineage>
</organism>
<reference key="1">
    <citation type="journal article" date="2002" name="J. Bacteriol.">
        <title>Whole-genome comparison of Mycobacterium tuberculosis clinical and laboratory strains.</title>
        <authorList>
            <person name="Fleischmann R.D."/>
            <person name="Alland D."/>
            <person name="Eisen J.A."/>
            <person name="Carpenter L."/>
            <person name="White O."/>
            <person name="Peterson J.D."/>
            <person name="DeBoy R.T."/>
            <person name="Dodson R.J."/>
            <person name="Gwinn M.L."/>
            <person name="Haft D.H."/>
            <person name="Hickey E.K."/>
            <person name="Kolonay J.F."/>
            <person name="Nelson W.C."/>
            <person name="Umayam L.A."/>
            <person name="Ermolaeva M.D."/>
            <person name="Salzberg S.L."/>
            <person name="Delcher A."/>
            <person name="Utterback T.R."/>
            <person name="Weidman J.F."/>
            <person name="Khouri H.M."/>
            <person name="Gill J."/>
            <person name="Mikula A."/>
            <person name="Bishai W."/>
            <person name="Jacobs W.R. Jr."/>
            <person name="Venter J.C."/>
            <person name="Fraser C.M."/>
        </authorList>
    </citation>
    <scope>NUCLEOTIDE SEQUENCE [LARGE SCALE GENOMIC DNA]</scope>
    <source>
        <strain>CDC 1551 / Oshkosh</strain>
    </source>
</reference>
<comment type="subcellular location">
    <subcellularLocation>
        <location evidence="2">Cell membrane</location>
        <topology evidence="2">Multi-pass membrane protein</topology>
    </subcellularLocation>
</comment>
<comment type="sequence caution" evidence="2">
    <conflict type="erroneous initiation">
        <sequence resource="EMBL-CDS" id="AAK46425"/>
    </conflict>
    <text>Extended N-terminus.</text>
</comment>
<protein>
    <recommendedName>
        <fullName>Uncharacterized protein MT2143</fullName>
    </recommendedName>
</protein>
<proteinExistence type="predicted"/>